<proteinExistence type="inferred from homology"/>
<protein>
    <recommendedName>
        <fullName evidence="1">Anhydro-N-acetylmuramic acid kinase</fullName>
        <ecNumber evidence="1">2.7.1.170</ecNumber>
    </recommendedName>
    <alternativeName>
        <fullName evidence="1">AnhMurNAc kinase</fullName>
    </alternativeName>
</protein>
<name>ANMK_ENT38</name>
<feature type="chain" id="PRO_1000067348" description="Anhydro-N-acetylmuramic acid kinase">
    <location>
        <begin position="1"/>
        <end position="374"/>
    </location>
</feature>
<feature type="binding site" evidence="1">
    <location>
        <begin position="12"/>
        <end position="19"/>
    </location>
    <ligand>
        <name>ATP</name>
        <dbReference type="ChEBI" id="CHEBI:30616"/>
    </ligand>
</feature>
<keyword id="KW-0067">ATP-binding</keyword>
<keyword id="KW-0119">Carbohydrate metabolism</keyword>
<keyword id="KW-0418">Kinase</keyword>
<keyword id="KW-0547">Nucleotide-binding</keyword>
<keyword id="KW-0808">Transferase</keyword>
<evidence type="ECO:0000255" key="1">
    <source>
        <dbReference type="HAMAP-Rule" id="MF_01270"/>
    </source>
</evidence>
<organism>
    <name type="scientific">Enterobacter sp. (strain 638)</name>
    <dbReference type="NCBI Taxonomy" id="399742"/>
    <lineage>
        <taxon>Bacteria</taxon>
        <taxon>Pseudomonadati</taxon>
        <taxon>Pseudomonadota</taxon>
        <taxon>Gammaproteobacteria</taxon>
        <taxon>Enterobacterales</taxon>
        <taxon>Enterobacteriaceae</taxon>
        <taxon>Enterobacter</taxon>
    </lineage>
</organism>
<accession>A4W9V7</accession>
<dbReference type="EC" id="2.7.1.170" evidence="1"/>
<dbReference type="EMBL" id="CP000653">
    <property type="protein sequence ID" value="ABP60487.1"/>
    <property type="molecule type" value="Genomic_DNA"/>
</dbReference>
<dbReference type="RefSeq" id="WP_012017202.1">
    <property type="nucleotide sequence ID" value="NC_009436.1"/>
</dbReference>
<dbReference type="SMR" id="A4W9V7"/>
<dbReference type="STRING" id="399742.Ent638_1808"/>
<dbReference type="KEGG" id="ent:Ent638_1808"/>
<dbReference type="eggNOG" id="COG2377">
    <property type="taxonomic scope" value="Bacteria"/>
</dbReference>
<dbReference type="HOGENOM" id="CLU_038782_0_0_6"/>
<dbReference type="OrthoDB" id="9763949at2"/>
<dbReference type="UniPathway" id="UPA00343"/>
<dbReference type="UniPathway" id="UPA00544"/>
<dbReference type="Proteomes" id="UP000000230">
    <property type="component" value="Chromosome"/>
</dbReference>
<dbReference type="GO" id="GO:0005524">
    <property type="term" value="F:ATP binding"/>
    <property type="evidence" value="ECO:0007669"/>
    <property type="project" value="UniProtKB-UniRule"/>
</dbReference>
<dbReference type="GO" id="GO:0016301">
    <property type="term" value="F:kinase activity"/>
    <property type="evidence" value="ECO:0007669"/>
    <property type="project" value="UniProtKB-KW"/>
</dbReference>
<dbReference type="GO" id="GO:0016773">
    <property type="term" value="F:phosphotransferase activity, alcohol group as acceptor"/>
    <property type="evidence" value="ECO:0007669"/>
    <property type="project" value="UniProtKB-UniRule"/>
</dbReference>
<dbReference type="GO" id="GO:0097175">
    <property type="term" value="P:1,6-anhydro-N-acetyl-beta-muramic acid catabolic process"/>
    <property type="evidence" value="ECO:0007669"/>
    <property type="project" value="UniProtKB-UniRule"/>
</dbReference>
<dbReference type="GO" id="GO:0006040">
    <property type="term" value="P:amino sugar metabolic process"/>
    <property type="evidence" value="ECO:0007669"/>
    <property type="project" value="InterPro"/>
</dbReference>
<dbReference type="GO" id="GO:0009254">
    <property type="term" value="P:peptidoglycan turnover"/>
    <property type="evidence" value="ECO:0007669"/>
    <property type="project" value="UniProtKB-UniRule"/>
</dbReference>
<dbReference type="CDD" id="cd24050">
    <property type="entry name" value="ASKHA_NBD_ANMK"/>
    <property type="match status" value="1"/>
</dbReference>
<dbReference type="Gene3D" id="3.30.420.40">
    <property type="match status" value="2"/>
</dbReference>
<dbReference type="HAMAP" id="MF_01270">
    <property type="entry name" value="AnhMurNAc_kinase"/>
    <property type="match status" value="1"/>
</dbReference>
<dbReference type="InterPro" id="IPR005338">
    <property type="entry name" value="Anhydro_N_Ac-Mur_kinase"/>
</dbReference>
<dbReference type="InterPro" id="IPR043129">
    <property type="entry name" value="ATPase_NBD"/>
</dbReference>
<dbReference type="NCBIfam" id="NF007138">
    <property type="entry name" value="PRK09585.1-1"/>
    <property type="match status" value="1"/>
</dbReference>
<dbReference type="NCBIfam" id="NF007139">
    <property type="entry name" value="PRK09585.1-3"/>
    <property type="match status" value="1"/>
</dbReference>
<dbReference type="PANTHER" id="PTHR30605">
    <property type="entry name" value="ANHYDRO-N-ACETYLMURAMIC ACID KINASE"/>
    <property type="match status" value="1"/>
</dbReference>
<dbReference type="PANTHER" id="PTHR30605:SF0">
    <property type="entry name" value="ANHYDRO-N-ACETYLMURAMIC ACID KINASE"/>
    <property type="match status" value="1"/>
</dbReference>
<dbReference type="Pfam" id="PF03702">
    <property type="entry name" value="AnmK"/>
    <property type="match status" value="1"/>
</dbReference>
<dbReference type="SUPFAM" id="SSF53067">
    <property type="entry name" value="Actin-like ATPase domain"/>
    <property type="match status" value="1"/>
</dbReference>
<sequence length="374" mass="40054">MKSGRYIGVMSGTSLDGVDVVLAAIDENMVAQQASLTWPIPVALKEAILSICQGQQLTLSQLGQLDVKLGALFGEAVLALMHQENLHPQDIVAIGCHGQTVWHEPTGDAPHSLQIGDNNQIVAKTGVTVVGDFRRRDIALGGQGAPLVPAFHEALLAHPVERRMVLNIGGIANLSMLIPGQPVRGYDTGPGNMLMDAWIWRQRRMAYDKDAQWAREGKVIIPLLQTFLSDPYFAAPAPKSTGREYFNYGWLERQLAQFPGLAAQDVQATLVELTAVSISEQVLLSGGCERLLVCGGGSRNPLVMARLAGLLPGTEVTTTDEAGISGDDMEALAFAWLAWRTVAGLQGNLPSVTGAREASVLGAIYPANPRHNQS</sequence>
<reference key="1">
    <citation type="journal article" date="2010" name="PLoS Genet.">
        <title>Genome sequence of the plant growth promoting endophytic bacterium Enterobacter sp. 638.</title>
        <authorList>
            <person name="Taghavi S."/>
            <person name="van der Lelie D."/>
            <person name="Hoffman A."/>
            <person name="Zhang Y.B."/>
            <person name="Walla M.D."/>
            <person name="Vangronsveld J."/>
            <person name="Newman L."/>
            <person name="Monchy S."/>
        </authorList>
    </citation>
    <scope>NUCLEOTIDE SEQUENCE [LARGE SCALE GENOMIC DNA]</scope>
    <source>
        <strain>638</strain>
    </source>
</reference>
<comment type="function">
    <text evidence="1">Catalyzes the specific phosphorylation of 1,6-anhydro-N-acetylmuramic acid (anhMurNAc) with the simultaneous cleavage of the 1,6-anhydro ring, generating MurNAc-6-P. Is required for the utilization of anhMurNAc either imported from the medium or derived from its own cell wall murein, and thus plays a role in cell wall recycling.</text>
</comment>
<comment type="catalytic activity">
    <reaction evidence="1">
        <text>1,6-anhydro-N-acetyl-beta-muramate + ATP + H2O = N-acetyl-D-muramate 6-phosphate + ADP + H(+)</text>
        <dbReference type="Rhea" id="RHEA:24952"/>
        <dbReference type="ChEBI" id="CHEBI:15377"/>
        <dbReference type="ChEBI" id="CHEBI:15378"/>
        <dbReference type="ChEBI" id="CHEBI:30616"/>
        <dbReference type="ChEBI" id="CHEBI:58690"/>
        <dbReference type="ChEBI" id="CHEBI:58722"/>
        <dbReference type="ChEBI" id="CHEBI:456216"/>
        <dbReference type="EC" id="2.7.1.170"/>
    </reaction>
</comment>
<comment type="pathway">
    <text evidence="1">Amino-sugar metabolism; 1,6-anhydro-N-acetylmuramate degradation.</text>
</comment>
<comment type="pathway">
    <text evidence="1">Cell wall biogenesis; peptidoglycan recycling.</text>
</comment>
<comment type="similarity">
    <text evidence="1">Belongs to the anhydro-N-acetylmuramic acid kinase family.</text>
</comment>
<gene>
    <name evidence="1" type="primary">anmK</name>
    <name type="ordered locus">Ent638_1808</name>
</gene>